<dbReference type="EMBL" id="L04278">
    <property type="status" value="NOT_ANNOTATED_CDS"/>
    <property type="molecule type" value="mRNA"/>
</dbReference>
<dbReference type="SMR" id="P35448"/>
<dbReference type="GlyCosmos" id="P35448">
    <property type="glycosylation" value="7 sites, No reported glycans"/>
</dbReference>
<dbReference type="AGR" id="Xenbase:XB-GENE-6253120"/>
<dbReference type="Xenbase" id="XB-GENE-6253120">
    <property type="gene designation" value="thbs1.S"/>
</dbReference>
<dbReference type="Proteomes" id="UP000186698">
    <property type="component" value="Unplaced"/>
</dbReference>
<dbReference type="GO" id="GO:0009986">
    <property type="term" value="C:cell surface"/>
    <property type="evidence" value="ECO:0007669"/>
    <property type="project" value="UniProtKB-SubCell"/>
</dbReference>
<dbReference type="GO" id="GO:0062023">
    <property type="term" value="C:collagen-containing extracellular matrix"/>
    <property type="evidence" value="ECO:0000318"/>
    <property type="project" value="GO_Central"/>
</dbReference>
<dbReference type="GO" id="GO:0005783">
    <property type="term" value="C:endoplasmic reticulum"/>
    <property type="evidence" value="ECO:0000250"/>
    <property type="project" value="UniProtKB"/>
</dbReference>
<dbReference type="GO" id="GO:0031012">
    <property type="term" value="C:extracellular matrix"/>
    <property type="evidence" value="ECO:0000250"/>
    <property type="project" value="UniProtKB"/>
</dbReference>
<dbReference type="GO" id="GO:0005576">
    <property type="term" value="C:extracellular region"/>
    <property type="evidence" value="ECO:0007669"/>
    <property type="project" value="UniProtKB-SubCell"/>
</dbReference>
<dbReference type="GO" id="GO:0016529">
    <property type="term" value="C:sarcoplasmic reticulum"/>
    <property type="evidence" value="ECO:0000250"/>
    <property type="project" value="UniProtKB"/>
</dbReference>
<dbReference type="GO" id="GO:0005509">
    <property type="term" value="F:calcium ion binding"/>
    <property type="evidence" value="ECO:0007669"/>
    <property type="project" value="InterPro"/>
</dbReference>
<dbReference type="GO" id="GO:0008201">
    <property type="term" value="F:heparin binding"/>
    <property type="evidence" value="ECO:0007669"/>
    <property type="project" value="UniProtKB-KW"/>
</dbReference>
<dbReference type="GO" id="GO:0007155">
    <property type="term" value="P:cell adhesion"/>
    <property type="evidence" value="ECO:0007669"/>
    <property type="project" value="UniProtKB-KW"/>
</dbReference>
<dbReference type="GO" id="GO:0016525">
    <property type="term" value="P:negative regulation of angiogenesis"/>
    <property type="evidence" value="ECO:0000318"/>
    <property type="project" value="GO_Central"/>
</dbReference>
<dbReference type="GO" id="GO:0006986">
    <property type="term" value="P:response to unfolded protein"/>
    <property type="evidence" value="ECO:0007669"/>
    <property type="project" value="UniProtKB-KW"/>
</dbReference>
<dbReference type="FunFam" id="2.20.100.10:FF:000004">
    <property type="entry name" value="Adhesion G protein-coupled receptor B2"/>
    <property type="match status" value="1"/>
</dbReference>
<dbReference type="FunFam" id="4.10.1080.10:FF:000004">
    <property type="entry name" value="Cartilage oligomeric matrix protein"/>
    <property type="match status" value="1"/>
</dbReference>
<dbReference type="FunFam" id="2.20.100.10:FF:000007">
    <property type="entry name" value="Thrombospondin 1"/>
    <property type="match status" value="2"/>
</dbReference>
<dbReference type="FunFam" id="2.60.120.200:FF:000009">
    <property type="entry name" value="Thrombospondin 1"/>
    <property type="match status" value="1"/>
</dbReference>
<dbReference type="FunFam" id="2.10.25.10:FF:000070">
    <property type="entry name" value="Thrombospondin 2"/>
    <property type="match status" value="1"/>
</dbReference>
<dbReference type="FunFam" id="2.10.25.10:FF:000025">
    <property type="entry name" value="Thrombospondin 3"/>
    <property type="match status" value="1"/>
</dbReference>
<dbReference type="FunFam" id="2.10.25.10:FF:000027">
    <property type="entry name" value="Thrombospondin 3"/>
    <property type="match status" value="1"/>
</dbReference>
<dbReference type="FunFam" id="4.10.1080.10:FF:000001">
    <property type="entry name" value="Thrombospondin 3"/>
    <property type="match status" value="1"/>
</dbReference>
<dbReference type="FunFam" id="4.10.1080.10:FF:000002">
    <property type="entry name" value="Thrombospondin 3"/>
    <property type="match status" value="1"/>
</dbReference>
<dbReference type="FunFam" id="2.60.120.200:FF:000041">
    <property type="entry name" value="thrombospondin-1"/>
    <property type="match status" value="1"/>
</dbReference>
<dbReference type="Gene3D" id="2.60.120.200">
    <property type="match status" value="2"/>
</dbReference>
<dbReference type="Gene3D" id="6.20.200.20">
    <property type="match status" value="1"/>
</dbReference>
<dbReference type="Gene3D" id="2.10.25.10">
    <property type="entry name" value="Laminin"/>
    <property type="match status" value="3"/>
</dbReference>
<dbReference type="Gene3D" id="2.20.100.10">
    <property type="entry name" value="Thrombospondin type-1 (TSP1) repeat"/>
    <property type="match status" value="3"/>
</dbReference>
<dbReference type="Gene3D" id="4.10.1080.10">
    <property type="entry name" value="TSP type-3 repeat"/>
    <property type="match status" value="2"/>
</dbReference>
<dbReference type="InterPro" id="IPR013320">
    <property type="entry name" value="ConA-like_dom_sf"/>
</dbReference>
<dbReference type="InterPro" id="IPR001881">
    <property type="entry name" value="EGF-like_Ca-bd_dom"/>
</dbReference>
<dbReference type="InterPro" id="IPR000742">
    <property type="entry name" value="EGF-like_dom"/>
</dbReference>
<dbReference type="InterPro" id="IPR024731">
    <property type="entry name" value="EGF_dom"/>
</dbReference>
<dbReference type="InterPro" id="IPR003367">
    <property type="entry name" value="Thrombospondin_3-like_rpt"/>
</dbReference>
<dbReference type="InterPro" id="IPR017897">
    <property type="entry name" value="Thrombospondin_3_rpt"/>
</dbReference>
<dbReference type="InterPro" id="IPR008859">
    <property type="entry name" value="Thrombospondin_C"/>
</dbReference>
<dbReference type="InterPro" id="IPR000884">
    <property type="entry name" value="TSP1_rpt"/>
</dbReference>
<dbReference type="InterPro" id="IPR036383">
    <property type="entry name" value="TSP1_rpt_sf"/>
</dbReference>
<dbReference type="InterPro" id="IPR028974">
    <property type="entry name" value="TSP_type-3_rpt"/>
</dbReference>
<dbReference type="InterPro" id="IPR048287">
    <property type="entry name" value="TSPN-like_N"/>
</dbReference>
<dbReference type="InterPro" id="IPR001007">
    <property type="entry name" value="VWF_dom"/>
</dbReference>
<dbReference type="PANTHER" id="PTHR10199">
    <property type="entry name" value="THROMBOSPONDIN"/>
    <property type="match status" value="1"/>
</dbReference>
<dbReference type="PANTHER" id="PTHR10199:SF78">
    <property type="entry name" value="THROMBOSPONDIN-1"/>
    <property type="match status" value="1"/>
</dbReference>
<dbReference type="Pfam" id="PF12947">
    <property type="entry name" value="EGF_3"/>
    <property type="match status" value="1"/>
</dbReference>
<dbReference type="Pfam" id="PF00090">
    <property type="entry name" value="TSP_1"/>
    <property type="match status" value="3"/>
</dbReference>
<dbReference type="Pfam" id="PF02412">
    <property type="entry name" value="TSP_3"/>
    <property type="match status" value="6"/>
</dbReference>
<dbReference type="Pfam" id="PF05735">
    <property type="entry name" value="TSP_C"/>
    <property type="match status" value="1"/>
</dbReference>
<dbReference type="Pfam" id="PF00093">
    <property type="entry name" value="VWC"/>
    <property type="match status" value="1"/>
</dbReference>
<dbReference type="PRINTS" id="PR01705">
    <property type="entry name" value="TSP1REPEAT"/>
</dbReference>
<dbReference type="SMART" id="SM00181">
    <property type="entry name" value="EGF"/>
    <property type="match status" value="3"/>
</dbReference>
<dbReference type="SMART" id="SM00179">
    <property type="entry name" value="EGF_CA"/>
    <property type="match status" value="2"/>
</dbReference>
<dbReference type="SMART" id="SM00209">
    <property type="entry name" value="TSP1"/>
    <property type="match status" value="3"/>
</dbReference>
<dbReference type="SMART" id="SM00210">
    <property type="entry name" value="TSPN"/>
    <property type="match status" value="1"/>
</dbReference>
<dbReference type="SMART" id="SM00214">
    <property type="entry name" value="VWC"/>
    <property type="match status" value="1"/>
</dbReference>
<dbReference type="SUPFAM" id="SSF49899">
    <property type="entry name" value="Concanavalin A-like lectins/glucanases"/>
    <property type="match status" value="2"/>
</dbReference>
<dbReference type="SUPFAM" id="SSF57196">
    <property type="entry name" value="EGF/Laminin"/>
    <property type="match status" value="1"/>
</dbReference>
<dbReference type="SUPFAM" id="SSF57603">
    <property type="entry name" value="FnI-like domain"/>
    <property type="match status" value="1"/>
</dbReference>
<dbReference type="SUPFAM" id="SSF103647">
    <property type="entry name" value="TSP type-3 repeat"/>
    <property type="match status" value="3"/>
</dbReference>
<dbReference type="SUPFAM" id="SSF82895">
    <property type="entry name" value="TSP-1 type 1 repeat"/>
    <property type="match status" value="3"/>
</dbReference>
<dbReference type="PROSITE" id="PS01186">
    <property type="entry name" value="EGF_2"/>
    <property type="match status" value="1"/>
</dbReference>
<dbReference type="PROSITE" id="PS50026">
    <property type="entry name" value="EGF_3"/>
    <property type="match status" value="2"/>
</dbReference>
<dbReference type="PROSITE" id="PS50092">
    <property type="entry name" value="TSP1"/>
    <property type="match status" value="3"/>
</dbReference>
<dbReference type="PROSITE" id="PS51234">
    <property type="entry name" value="TSP3"/>
    <property type="match status" value="8"/>
</dbReference>
<dbReference type="PROSITE" id="PS51236">
    <property type="entry name" value="TSP_CTER"/>
    <property type="match status" value="1"/>
</dbReference>
<dbReference type="PROSITE" id="PS01208">
    <property type="entry name" value="VWFC_1"/>
    <property type="match status" value="1"/>
</dbReference>
<dbReference type="PROSITE" id="PS50184">
    <property type="entry name" value="VWFC_2"/>
    <property type="match status" value="1"/>
</dbReference>
<proteinExistence type="evidence at transcript level"/>
<name>TSP1_XENLA</name>
<sequence length="1173" mass="130020">MKGIFLLLMLVMPQTHQAAESGNDDNSVFDLFELTGYNRKAGSRKPQGLHLVKGPDPSSPAYRIEDADLIPPLPEDKFQDLLDAIRADRGFILLATLRQAKKSRGALLSVERKDGGGHIFSLISNGRARTLDLSLSGERKQQVVSVEDAVLATGNWTNITLFVQEDRAQLYVGCNKMENAELDVPIQKIFTENLASTAHLRVAKGGVKDNFQGVLQNVRFVFGTTLEAILRNKGCLSMTNSVITLDNPVNGSSPAIRTNYIGHKTKDLQAVCGFSCDDLSKLFAEMKGLRTLVTTLKDQVTKETEKNELIAQIVTRTPGVCLHNGVLHKNRDEWTVDSCTECTCQNSATICRKVSCPLMPCTNATIPDGECCPRCWPSDSADDDWSPWSDWTPCSVTCGHGIQQRGRSCDSLNNPCEGSSVQTRSCQIQDCDKRFKQDGGWSHWSPWSSCSVTCGSGQITRIRLCNSPVPQLNGKQCEGEGRENKPCQKDPCPINGQWGPWSLWDTCTVTCGGGMQKRERLCNNPKPQYEGKDCIGEPTDSQICNKQDCPIDGCLSNPCFAGVKCTSFIDGSWKCGSCPPGYRGNGITCKDIDECKEVPDACFTLNGVHRCENTEPGYNCLPCPPRFTGTQPFGKGIEEAKANKQVCKPRNPCADGTHDCHKNARCIYLGHYSDPMFRCECRPGYAGNGIICGEDTDLDGWPNENLTCVDNATYHCLKDNCPNLPNSGQEDYDKDGMGDACDKDDDNDGILDDRDNCQFVYNPAQYDYDRDDVGDRCDNCPYNHNPDQADTDRNGEGDACSVDIDGDGILNERDNCAYVYNVDQKDTDKDGVGDQCDNCPLEHNPEQTDSDSDLIGDKCDNNQDIDEDGHQNNLDNCPYIPNANQADHDKDGKGDACDHDDDNDGVPDDKDNCRLVPNPDQTDTNGDGRGDACQYDFDDDSIPDAEDVCPENVEISTTDFRKFQMVPLDPKGTSQIDPNWVVRHQGKELVQTVNCDPGIAVGFDEFSAVDFSGTFFINTERDDDYAGFVFGYQSSSRFYVVMWKQITQTYWDTTPTVAQGYSGLSIKVVNSTSGPGEHLRNALWHTGNTPGQVRTLWHDPHQKGWKDFTAYRWHLTHRPKTGFIRVVMYEGKRVMADSGPIYDKTYAGGRLGLFVFSQEMVFFSDLKYECRDS</sequence>
<evidence type="ECO:0000250" key="1"/>
<evidence type="ECO:0000250" key="2">
    <source>
        <dbReference type="UniProtKB" id="P07996"/>
    </source>
</evidence>
<evidence type="ECO:0000250" key="3">
    <source>
        <dbReference type="UniProtKB" id="P35441"/>
    </source>
</evidence>
<evidence type="ECO:0000255" key="4"/>
<evidence type="ECO:0000255" key="5">
    <source>
        <dbReference type="PROSITE-ProRule" id="PRU00076"/>
    </source>
</evidence>
<evidence type="ECO:0000255" key="6">
    <source>
        <dbReference type="PROSITE-ProRule" id="PRU00210"/>
    </source>
</evidence>
<evidence type="ECO:0000255" key="7">
    <source>
        <dbReference type="PROSITE-ProRule" id="PRU00220"/>
    </source>
</evidence>
<evidence type="ECO:0000255" key="8">
    <source>
        <dbReference type="PROSITE-ProRule" id="PRU00635"/>
    </source>
</evidence>
<evidence type="ECO:0000256" key="9">
    <source>
        <dbReference type="SAM" id="MobiDB-lite"/>
    </source>
</evidence>
<evidence type="ECO:0000305" key="10"/>
<reference key="1">
    <citation type="submission" date="1993-05" db="EMBL/GenBank/DDBJ databases">
        <title>Cloning, characterization and expression of thrombospondin-1 in Xenopus laevis embryos.</title>
        <authorList>
            <person name="Urry L.A."/>
            <person name="Ramos J."/>
            <person name="Duquette M."/>
            <person name="Desimone D.W."/>
            <person name="Lawler J."/>
        </authorList>
    </citation>
    <scope>NUCLEOTIDE SEQUENCE [MRNA]</scope>
</reference>
<organism>
    <name type="scientific">Xenopus laevis</name>
    <name type="common">African clawed frog</name>
    <dbReference type="NCBI Taxonomy" id="8355"/>
    <lineage>
        <taxon>Eukaryota</taxon>
        <taxon>Metazoa</taxon>
        <taxon>Chordata</taxon>
        <taxon>Craniata</taxon>
        <taxon>Vertebrata</taxon>
        <taxon>Euteleostomi</taxon>
        <taxon>Amphibia</taxon>
        <taxon>Batrachia</taxon>
        <taxon>Anura</taxon>
        <taxon>Pipoidea</taxon>
        <taxon>Pipidae</taxon>
        <taxon>Xenopodinae</taxon>
        <taxon>Xenopus</taxon>
        <taxon>Xenopus</taxon>
    </lineage>
</organism>
<feature type="signal peptide" evidence="4">
    <location>
        <begin position="1"/>
        <end position="18"/>
    </location>
</feature>
<feature type="chain" id="PRO_0000035844" description="Thrombospondin-1">
    <location>
        <begin position="19"/>
        <end position="1173"/>
    </location>
</feature>
<feature type="domain" description="Laminin G-like">
    <location>
        <begin position="22"/>
        <end position="224"/>
    </location>
</feature>
<feature type="domain" description="VWFC" evidence="7">
    <location>
        <begin position="319"/>
        <end position="376"/>
    </location>
</feature>
<feature type="domain" description="TSP type-1 1" evidence="6">
    <location>
        <begin position="382"/>
        <end position="432"/>
    </location>
</feature>
<feature type="domain" description="TSP type-1 2" evidence="6">
    <location>
        <begin position="438"/>
        <end position="493"/>
    </location>
</feature>
<feature type="domain" description="TSP type-1 3" evidence="6">
    <location>
        <begin position="495"/>
        <end position="550"/>
    </location>
</feature>
<feature type="domain" description="EGF-like 1" evidence="5">
    <location>
        <begin position="550"/>
        <end position="590"/>
    </location>
</feature>
<feature type="domain" description="EGF-like 2" evidence="5">
    <location>
        <begin position="649"/>
        <end position="693"/>
    </location>
</feature>
<feature type="repeat" description="TSP type-3 1">
    <location>
        <begin position="694"/>
        <end position="729"/>
    </location>
</feature>
<feature type="repeat" description="TSP type-3 2">
    <location>
        <begin position="730"/>
        <end position="765"/>
    </location>
</feature>
<feature type="repeat" description="TSP type-3 3">
    <location>
        <begin position="766"/>
        <end position="788"/>
    </location>
</feature>
<feature type="repeat" description="TSP type-3 4">
    <location>
        <begin position="789"/>
        <end position="824"/>
    </location>
</feature>
<feature type="repeat" description="TSP type-3 5">
    <location>
        <begin position="825"/>
        <end position="847"/>
    </location>
</feature>
<feature type="repeat" description="TSP type-3 6">
    <location>
        <begin position="848"/>
        <end position="885"/>
    </location>
</feature>
<feature type="repeat" description="TSP type-3 7">
    <location>
        <begin position="886"/>
        <end position="921"/>
    </location>
</feature>
<feature type="repeat" description="TSP type-3 8">
    <location>
        <begin position="922"/>
        <end position="957"/>
    </location>
</feature>
<feature type="domain" description="TSP C-terminal" evidence="8">
    <location>
        <begin position="961"/>
        <end position="1173"/>
    </location>
</feature>
<feature type="region of interest" description="Heparin-binding" evidence="1">
    <location>
        <begin position="50"/>
        <end position="98"/>
    </location>
</feature>
<feature type="region of interest" description="Disordered" evidence="9">
    <location>
        <begin position="838"/>
        <end position="935"/>
    </location>
</feature>
<feature type="short sequence motif" description="Cell attachment site" evidence="4">
    <location>
        <begin position="929"/>
        <end position="931"/>
    </location>
</feature>
<feature type="compositionally biased region" description="Basic and acidic residues" evidence="9">
    <location>
        <begin position="886"/>
        <end position="897"/>
    </location>
</feature>
<feature type="glycosylation site" description="N-linked (GlcNAc...) asparagine" evidence="4">
    <location>
        <position position="155"/>
    </location>
</feature>
<feature type="glycosylation site" description="N-linked (GlcNAc...) asparagine" evidence="4">
    <location>
        <position position="158"/>
    </location>
</feature>
<feature type="glycosylation site" description="N-linked (GlcNAc...) asparagine" evidence="4">
    <location>
        <position position="250"/>
    </location>
</feature>
<feature type="glycosylation site" description="N-linked (GlcNAc...) asparagine" evidence="4">
    <location>
        <position position="363"/>
    </location>
</feature>
<feature type="glycosylation site" description="N-linked (GlcNAc...) asparagine" evidence="4">
    <location>
        <position position="705"/>
    </location>
</feature>
<feature type="glycosylation site" description="N-linked (GlcNAc...) asparagine" evidence="4">
    <location>
        <position position="711"/>
    </location>
</feature>
<feature type="glycosylation site" description="N-linked (GlcNAc...) asparagine" evidence="4">
    <location>
        <position position="1070"/>
    </location>
</feature>
<feature type="disulfide bond" evidence="1">
    <location>
        <begin position="174"/>
        <end position="235"/>
    </location>
</feature>
<feature type="disulfide bond" evidence="1">
    <location>
        <begin position="394"/>
        <end position="426"/>
    </location>
</feature>
<feature type="disulfide bond" evidence="1">
    <location>
        <begin position="398"/>
        <end position="431"/>
    </location>
</feature>
<feature type="disulfide bond" evidence="1">
    <location>
        <begin position="409"/>
        <end position="416"/>
    </location>
</feature>
<feature type="disulfide bond" evidence="1">
    <location>
        <begin position="450"/>
        <end position="487"/>
    </location>
</feature>
<feature type="disulfide bond" evidence="1">
    <location>
        <begin position="454"/>
        <end position="492"/>
    </location>
</feature>
<feature type="disulfide bond" evidence="1">
    <location>
        <begin position="465"/>
        <end position="477"/>
    </location>
</feature>
<feature type="disulfide bond" evidence="1">
    <location>
        <begin position="507"/>
        <end position="544"/>
    </location>
</feature>
<feature type="disulfide bond" evidence="1">
    <location>
        <begin position="511"/>
        <end position="549"/>
    </location>
</feature>
<feature type="disulfide bond" evidence="1">
    <location>
        <begin position="522"/>
        <end position="534"/>
    </location>
</feature>
<feature type="disulfide bond" evidence="1">
    <location>
        <begin position="554"/>
        <end position="565"/>
    </location>
</feature>
<feature type="disulfide bond" evidence="1">
    <location>
        <begin position="559"/>
        <end position="575"/>
    </location>
</feature>
<feature type="disulfide bond" evidence="1">
    <location>
        <begin position="578"/>
        <end position="589"/>
    </location>
</feature>
<feature type="disulfide bond" evidence="1">
    <location>
        <begin position="595"/>
        <end position="611"/>
    </location>
</feature>
<feature type="disulfide bond" evidence="1">
    <location>
        <begin position="602"/>
        <end position="620"/>
    </location>
</feature>
<feature type="disulfide bond" evidence="1">
    <location>
        <begin position="623"/>
        <end position="647"/>
    </location>
</feature>
<feature type="disulfide bond" evidence="1">
    <location>
        <begin position="653"/>
        <end position="666"/>
    </location>
</feature>
<feature type="disulfide bond" evidence="1">
    <location>
        <begin position="660"/>
        <end position="679"/>
    </location>
</feature>
<feature type="disulfide bond" evidence="1">
    <location>
        <begin position="681"/>
        <end position="692"/>
    </location>
</feature>
<feature type="disulfide bond" evidence="1">
    <location>
        <begin position="708"/>
        <end position="716"/>
    </location>
</feature>
<feature type="disulfide bond" evidence="1">
    <location>
        <begin position="721"/>
        <end position="741"/>
    </location>
</feature>
<feature type="disulfide bond" evidence="1">
    <location>
        <begin position="757"/>
        <end position="777"/>
    </location>
</feature>
<feature type="disulfide bond" evidence="1">
    <location>
        <begin position="780"/>
        <end position="800"/>
    </location>
</feature>
<feature type="disulfide bond" evidence="1">
    <location>
        <begin position="816"/>
        <end position="836"/>
    </location>
</feature>
<feature type="disulfide bond" evidence="1">
    <location>
        <begin position="839"/>
        <end position="859"/>
    </location>
</feature>
<feature type="disulfide bond" evidence="1">
    <location>
        <begin position="877"/>
        <end position="897"/>
    </location>
</feature>
<feature type="disulfide bond" evidence="1">
    <location>
        <begin position="913"/>
        <end position="933"/>
    </location>
</feature>
<feature type="disulfide bond" evidence="1">
    <location>
        <begin position="949"/>
        <end position="1170"/>
    </location>
</feature>
<comment type="function">
    <text evidence="1">Adhesive glycoprotein that mediates cell-to-cell and cell-to-matrix interactions. Can bind to fibrinogen, fibronectin, laminin, type V collagen and integrins alpha-V/beta-1, alpha-V/beta-3 and alpha-IIb/beta-3 (By similarity). May play a role in ER stress response (By similarity).</text>
</comment>
<comment type="subunit">
    <text>Homotrimer; disulfide-linked.</text>
</comment>
<comment type="subcellular location">
    <subcellularLocation>
        <location evidence="2">Secreted</location>
    </subcellularLocation>
    <subcellularLocation>
        <location evidence="2">Cell surface</location>
    </subcellularLocation>
    <subcellularLocation>
        <location evidence="2">Secreted</location>
        <location evidence="2">Extracellular space</location>
        <location evidence="2">Extracellular matrix</location>
    </subcellularLocation>
    <subcellularLocation>
        <location evidence="3">Endoplasmic reticulum</location>
    </subcellularLocation>
    <subcellularLocation>
        <location evidence="3">Sarcoplasmic reticulum</location>
    </subcellularLocation>
</comment>
<comment type="similarity">
    <text evidence="10">Belongs to the thrombospondin family.</text>
</comment>
<keyword id="KW-0106">Calcium</keyword>
<keyword id="KW-0130">Cell adhesion</keyword>
<keyword id="KW-1015">Disulfide bond</keyword>
<keyword id="KW-0245">EGF-like domain</keyword>
<keyword id="KW-0256">Endoplasmic reticulum</keyword>
<keyword id="KW-0272">Extracellular matrix</keyword>
<keyword id="KW-0325">Glycoprotein</keyword>
<keyword id="KW-0358">Heparin-binding</keyword>
<keyword id="KW-1185">Reference proteome</keyword>
<keyword id="KW-0677">Repeat</keyword>
<keyword id="KW-0703">Sarcoplasmic reticulum</keyword>
<keyword id="KW-0964">Secreted</keyword>
<keyword id="KW-0732">Signal</keyword>
<keyword id="KW-0834">Unfolded protein response</keyword>
<protein>
    <recommendedName>
        <fullName>Thrombospondin-1</fullName>
    </recommendedName>
    <alternativeName>
        <fullName evidence="2">Glycoprotein G</fullName>
    </alternativeName>
</protein>
<accession>P35448</accession>
<gene>
    <name type="primary">thbs1</name>
    <name type="synonym">tsp1</name>
</gene>